<organism>
    <name type="scientific">Homo sapiens</name>
    <name type="common">Human</name>
    <dbReference type="NCBI Taxonomy" id="9606"/>
    <lineage>
        <taxon>Eukaryota</taxon>
        <taxon>Metazoa</taxon>
        <taxon>Chordata</taxon>
        <taxon>Craniata</taxon>
        <taxon>Vertebrata</taxon>
        <taxon>Euteleostomi</taxon>
        <taxon>Mammalia</taxon>
        <taxon>Eutheria</taxon>
        <taxon>Euarchontoglires</taxon>
        <taxon>Primates</taxon>
        <taxon>Haplorrhini</taxon>
        <taxon>Catarrhini</taxon>
        <taxon>Hominidae</taxon>
        <taxon>Homo</taxon>
    </lineage>
</organism>
<feature type="chain" id="PRO_0000047594" description="Zinc finger protein 445">
    <location>
        <begin position="1"/>
        <end position="1031"/>
    </location>
</feature>
<feature type="domain" description="SCAN box" evidence="3">
    <location>
        <begin position="55"/>
        <end position="137"/>
    </location>
</feature>
<feature type="domain" description="KRAB" evidence="2">
    <location>
        <begin position="234"/>
        <end position="304"/>
    </location>
</feature>
<feature type="zinc finger region" description="C2H2-type 1" evidence="1">
    <location>
        <begin position="485"/>
        <end position="507"/>
    </location>
</feature>
<feature type="zinc finger region" description="C2H2-type 2" evidence="1">
    <location>
        <begin position="513"/>
        <end position="535"/>
    </location>
</feature>
<feature type="zinc finger region" description="C2H2-type 3" evidence="1">
    <location>
        <begin position="541"/>
        <end position="563"/>
    </location>
</feature>
<feature type="zinc finger region" description="C2H2-type 4" evidence="1">
    <location>
        <begin position="597"/>
        <end position="619"/>
    </location>
</feature>
<feature type="zinc finger region" description="C2H2-type 5" evidence="1">
    <location>
        <begin position="625"/>
        <end position="647"/>
    </location>
</feature>
<feature type="zinc finger region" description="C2H2-type 6" evidence="1">
    <location>
        <begin position="681"/>
        <end position="703"/>
    </location>
</feature>
<feature type="zinc finger region" description="C2H2-type 7" evidence="1">
    <location>
        <begin position="709"/>
        <end position="731"/>
    </location>
</feature>
<feature type="zinc finger region" description="C2H2-type 8" evidence="1">
    <location>
        <begin position="762"/>
        <end position="784"/>
    </location>
</feature>
<feature type="zinc finger region" description="C2H2-type 9" evidence="1">
    <location>
        <begin position="790"/>
        <end position="812"/>
    </location>
</feature>
<feature type="zinc finger region" description="C2H2-type 10" evidence="1">
    <location>
        <begin position="840"/>
        <end position="862"/>
    </location>
</feature>
<feature type="zinc finger region" description="C2H2-type 11" evidence="1">
    <location>
        <begin position="868"/>
        <end position="890"/>
    </location>
</feature>
<feature type="zinc finger region" description="C2H2-type 12" evidence="1">
    <location>
        <begin position="896"/>
        <end position="918"/>
    </location>
</feature>
<feature type="zinc finger region" description="C2H2-type 13" evidence="1">
    <location>
        <begin position="978"/>
        <end position="1000"/>
    </location>
</feature>
<feature type="zinc finger region" description="C2H2-type 14" evidence="1">
    <location>
        <begin position="1006"/>
        <end position="1028"/>
    </location>
</feature>
<feature type="region of interest" description="Disordered" evidence="4">
    <location>
        <begin position="1"/>
        <end position="43"/>
    </location>
</feature>
<feature type="region of interest" description="Disordered" evidence="4">
    <location>
        <begin position="911"/>
        <end position="939"/>
    </location>
</feature>
<feature type="compositionally biased region" description="Basic and acidic residues" evidence="4">
    <location>
        <begin position="17"/>
        <end position="29"/>
    </location>
</feature>
<feature type="cross-link" description="Glycyl lysine isopeptide (Lys-Gly) (interchain with G-Cter in SUMO1)" evidence="9">
    <location>
        <position position="28"/>
    </location>
</feature>
<feature type="cross-link" description="Glycyl lysine isopeptide (Lys-Gly) (interchain with G-Cter in SUMO2)" evidence="12">
    <location>
        <position position="317"/>
    </location>
</feature>
<feature type="cross-link" description="Glycyl lysine isopeptide (Lys-Gly) (interchain with G-Cter in SUMO2)" evidence="12">
    <location>
        <position position="374"/>
    </location>
</feature>
<feature type="cross-link" description="Glycyl lysine isopeptide (Lys-Gly) (interchain with G-Cter in SUMO2)" evidence="12">
    <location>
        <position position="375"/>
    </location>
</feature>
<feature type="cross-link" description="Glycyl lysine isopeptide (Lys-Gly) (interchain with G-Cter in SUMO2)" evidence="12">
    <location>
        <position position="399"/>
    </location>
</feature>
<feature type="cross-link" description="Glycyl lysine isopeptide (Lys-Gly) (interchain with G-Cter in SUMO2)" evidence="12">
    <location>
        <position position="567"/>
    </location>
</feature>
<feature type="cross-link" description="Glycyl lysine isopeptide (Lys-Gly) (interchain with G-Cter in SUMO2)" evidence="12">
    <location>
        <position position="654"/>
    </location>
</feature>
<feature type="cross-link" description="Glycyl lysine isopeptide (Lys-Gly) (interchain with G-Cter in SUMO2)" evidence="12">
    <location>
        <position position="736"/>
    </location>
</feature>
<feature type="cross-link" description="Glycyl lysine isopeptide (Lys-Gly) (interchain with G-Cter in SUMO2)" evidence="12">
    <location>
        <position position="758"/>
    </location>
</feature>
<feature type="cross-link" description="Glycyl lysine isopeptide (Lys-Gly) (interchain with G-Cter in SUMO2)" evidence="10 11 12">
    <location>
        <position position="938"/>
    </location>
</feature>
<feature type="cross-link" description="Glycyl lysine isopeptide (Lys-Gly) (interchain with G-Cter in SUMO2)" evidence="12">
    <location>
        <position position="956"/>
    </location>
</feature>
<feature type="cross-link" description="Glycyl lysine isopeptide (Lys-Gly) (interchain with G-Cter in SUMO2)" evidence="12">
    <location>
        <position position="975"/>
    </location>
</feature>
<feature type="sequence variant" id="VAR_052832" description="In dbSNP:rs11710965.">
    <original>Y</original>
    <variation>C</variation>
    <location>
        <position position="428"/>
    </location>
</feature>
<accession>P59923</accession>
<accession>Q3MJD1</accession>
<comment type="function">
    <text evidence="5">Transcription regulator required to maintain maternal and paternal gene imprinting, a process by which gene expression is restricted in a parent of origin-specific manner by epigenetic modification of genomic DNA and chromatin, including DNA methylation. Acts by controlling DNA methylation during the earliest multicellular stages of development at multiple imprinting control regions (ICRs) (PubMed:30602440). Acts together with ZFP57, but seems to be the major factor in human early embryonic imprinting maintenance. In contrast, in mice, ZFP57 plays the predominant role in imprinting maintenance (PubMed:30602440).</text>
</comment>
<comment type="interaction">
    <interactant intactId="EBI-2849229">
        <id>P59923</id>
    </interactant>
    <interactant intactId="EBI-928842">
        <id>Q9GZM8</id>
        <label>NDEL1</label>
    </interactant>
    <organismsDiffer>false</organismsDiffer>
    <experiments>3</experiments>
</comment>
<comment type="subcellular location">
    <subcellularLocation>
        <location evidence="5">Nucleus</location>
    </subcellularLocation>
    <text evidence="5">Binds various differentially methylated regions (DMR).</text>
</comment>
<comment type="developmental stage">
    <text evidence="5">Expressed in the oocyte, expression is maintained at least until blastocyst stage.</text>
</comment>
<comment type="similarity">
    <text evidence="7">Belongs to the krueppel C2H2-type zinc-finger protein family.</text>
</comment>
<proteinExistence type="evidence at protein level"/>
<dbReference type="EMBL" id="AY262260">
    <property type="protein sequence ID" value="AAP36990.1"/>
    <property type="molecule type" value="mRNA"/>
</dbReference>
<dbReference type="EMBL" id="AY295873">
    <property type="protein sequence ID" value="AAP50258.1"/>
    <property type="molecule type" value="mRNA"/>
</dbReference>
<dbReference type="EMBL" id="BC101486">
    <property type="protein sequence ID" value="AAI01487.1"/>
    <property type="molecule type" value="mRNA"/>
</dbReference>
<dbReference type="CCDS" id="CCDS2713.1"/>
<dbReference type="RefSeq" id="NP_852466.1">
    <property type="nucleotide sequence ID" value="NM_181489.6"/>
</dbReference>
<dbReference type="RefSeq" id="XP_005265159.1">
    <property type="nucleotide sequence ID" value="XM_005265102.2"/>
</dbReference>
<dbReference type="RefSeq" id="XP_011531976.1">
    <property type="nucleotide sequence ID" value="XM_011533674.2"/>
</dbReference>
<dbReference type="SMR" id="P59923"/>
<dbReference type="BioGRID" id="131672">
    <property type="interactions" value="59"/>
</dbReference>
<dbReference type="FunCoup" id="P59923">
    <property type="interactions" value="1279"/>
</dbReference>
<dbReference type="IntAct" id="P59923">
    <property type="interactions" value="67"/>
</dbReference>
<dbReference type="MINT" id="P59923"/>
<dbReference type="STRING" id="9606.ENSP00000379387"/>
<dbReference type="GlyGen" id="P59923">
    <property type="glycosylation" value="1 site, 1 O-linked glycan (1 site)"/>
</dbReference>
<dbReference type="iPTMnet" id="P59923"/>
<dbReference type="PhosphoSitePlus" id="P59923"/>
<dbReference type="BioMuta" id="ZNF445"/>
<dbReference type="DMDM" id="45593854"/>
<dbReference type="jPOST" id="P59923"/>
<dbReference type="MassIVE" id="P59923"/>
<dbReference type="PaxDb" id="9606-ENSP00000413073"/>
<dbReference type="PeptideAtlas" id="P59923"/>
<dbReference type="ProteomicsDB" id="57172"/>
<dbReference type="Pumba" id="P59923"/>
<dbReference type="Antibodypedia" id="29430">
    <property type="antibodies" value="40 antibodies from 12 providers"/>
</dbReference>
<dbReference type="DNASU" id="353274"/>
<dbReference type="Ensembl" id="ENST00000396077.8">
    <property type="protein sequence ID" value="ENSP00000379387.2"/>
    <property type="gene ID" value="ENSG00000185219.18"/>
</dbReference>
<dbReference type="Ensembl" id="ENST00000425708.6">
    <property type="protein sequence ID" value="ENSP00000413073.2"/>
    <property type="gene ID" value="ENSG00000185219.18"/>
</dbReference>
<dbReference type="GeneID" id="353274"/>
<dbReference type="KEGG" id="hsa:353274"/>
<dbReference type="MANE-Select" id="ENST00000396077.8">
    <property type="protein sequence ID" value="ENSP00000379387.2"/>
    <property type="RefSeq nucleotide sequence ID" value="NM_181489.6"/>
    <property type="RefSeq protein sequence ID" value="NP_852466.1"/>
</dbReference>
<dbReference type="UCSC" id="uc003cnf.3">
    <property type="organism name" value="human"/>
</dbReference>
<dbReference type="AGR" id="HGNC:21018"/>
<dbReference type="CTD" id="353274"/>
<dbReference type="DisGeNET" id="353274"/>
<dbReference type="GeneCards" id="ZNF445"/>
<dbReference type="HGNC" id="HGNC:21018">
    <property type="gene designation" value="ZNF445"/>
</dbReference>
<dbReference type="HPA" id="ENSG00000185219">
    <property type="expression patterns" value="Low tissue specificity"/>
</dbReference>
<dbReference type="MIM" id="619508">
    <property type="type" value="gene"/>
</dbReference>
<dbReference type="neXtProt" id="NX_P59923"/>
<dbReference type="OpenTargets" id="ENSG00000185219"/>
<dbReference type="PharmGKB" id="PA134904986"/>
<dbReference type="VEuPathDB" id="HostDB:ENSG00000185219"/>
<dbReference type="eggNOG" id="KOG1721">
    <property type="taxonomic scope" value="Eukaryota"/>
</dbReference>
<dbReference type="GeneTree" id="ENSGT00900000141186"/>
<dbReference type="HOGENOM" id="CLU_002678_23_0_1"/>
<dbReference type="InParanoid" id="P59923"/>
<dbReference type="OMA" id="PYEIGVC"/>
<dbReference type="OrthoDB" id="8922241at2759"/>
<dbReference type="PAN-GO" id="P59923">
    <property type="GO annotations" value="4 GO annotations based on evolutionary models"/>
</dbReference>
<dbReference type="PhylomeDB" id="P59923"/>
<dbReference type="TreeFam" id="TF350827"/>
<dbReference type="PathwayCommons" id="P59923"/>
<dbReference type="Reactome" id="R-HSA-212436">
    <property type="pathway name" value="Generic Transcription Pathway"/>
</dbReference>
<dbReference type="SignaLink" id="P59923"/>
<dbReference type="BioGRID-ORCS" id="353274">
    <property type="hits" value="27 hits in 1193 CRISPR screens"/>
</dbReference>
<dbReference type="ChiTaRS" id="ZNF445">
    <property type="organism name" value="human"/>
</dbReference>
<dbReference type="GenomeRNAi" id="353274"/>
<dbReference type="Pharos" id="P59923">
    <property type="development level" value="Tdark"/>
</dbReference>
<dbReference type="PRO" id="PR:P59923"/>
<dbReference type="Proteomes" id="UP000005640">
    <property type="component" value="Chromosome 3"/>
</dbReference>
<dbReference type="RNAct" id="P59923">
    <property type="molecule type" value="protein"/>
</dbReference>
<dbReference type="Bgee" id="ENSG00000185219">
    <property type="expression patterns" value="Expressed in cortical plate and 110 other cell types or tissues"/>
</dbReference>
<dbReference type="ExpressionAtlas" id="P59923">
    <property type="expression patterns" value="baseline and differential"/>
</dbReference>
<dbReference type="GO" id="GO:0005634">
    <property type="term" value="C:nucleus"/>
    <property type="evidence" value="ECO:0000314"/>
    <property type="project" value="UniProtKB"/>
</dbReference>
<dbReference type="GO" id="GO:0003682">
    <property type="term" value="F:chromatin binding"/>
    <property type="evidence" value="ECO:0007669"/>
    <property type="project" value="Ensembl"/>
</dbReference>
<dbReference type="GO" id="GO:0010385">
    <property type="term" value="F:double-stranded methylated DNA binding"/>
    <property type="evidence" value="ECO:0000314"/>
    <property type="project" value="UniProtKB"/>
</dbReference>
<dbReference type="GO" id="GO:0008270">
    <property type="term" value="F:zinc ion binding"/>
    <property type="evidence" value="ECO:0007669"/>
    <property type="project" value="UniProtKB-KW"/>
</dbReference>
<dbReference type="GO" id="GO:0044726">
    <property type="term" value="P:epigenetic programing of female pronucleus"/>
    <property type="evidence" value="ECO:0000315"/>
    <property type="project" value="UniProtKB"/>
</dbReference>
<dbReference type="GO" id="GO:0044027">
    <property type="term" value="P:negative regulation of gene expression via chromosomal CpG island methylation"/>
    <property type="evidence" value="ECO:0000315"/>
    <property type="project" value="UniProtKB"/>
</dbReference>
<dbReference type="GO" id="GO:0006357">
    <property type="term" value="P:regulation of transcription by RNA polymerase II"/>
    <property type="evidence" value="ECO:0000318"/>
    <property type="project" value="GO_Central"/>
</dbReference>
<dbReference type="CDD" id="cd07765">
    <property type="entry name" value="KRAB_A-box"/>
    <property type="match status" value="1"/>
</dbReference>
<dbReference type="CDD" id="cd07936">
    <property type="entry name" value="SCAN"/>
    <property type="match status" value="1"/>
</dbReference>
<dbReference type="FunFam" id="3.30.160.60:FF:000800">
    <property type="entry name" value="zinc finger protein 181 isoform X2"/>
    <property type="match status" value="1"/>
</dbReference>
<dbReference type="FunFam" id="3.30.160.60:FF:000688">
    <property type="entry name" value="zinc finger protein 197 isoform X1"/>
    <property type="match status" value="2"/>
</dbReference>
<dbReference type="FunFam" id="3.30.160.60:FF:000870">
    <property type="entry name" value="zinc finger protein 197 isoform X1"/>
    <property type="match status" value="1"/>
</dbReference>
<dbReference type="FunFam" id="1.10.4020.10:FF:000001">
    <property type="entry name" value="zinc finger protein 263 isoform X1"/>
    <property type="match status" value="1"/>
</dbReference>
<dbReference type="FunFam" id="3.30.160.60:FF:001915">
    <property type="entry name" value="Zinc finger protein 287"/>
    <property type="match status" value="1"/>
</dbReference>
<dbReference type="FunFam" id="3.30.160.60:FF:000690">
    <property type="entry name" value="Zinc finger protein 354C"/>
    <property type="match status" value="1"/>
</dbReference>
<dbReference type="FunFam" id="3.30.160.60:FF:000016">
    <property type="entry name" value="zinc finger protein 37 homolog"/>
    <property type="match status" value="1"/>
</dbReference>
<dbReference type="FunFam" id="3.30.160.60:FF:000902">
    <property type="entry name" value="Zinc finger protein 445"/>
    <property type="match status" value="1"/>
</dbReference>
<dbReference type="FunFam" id="3.30.160.60:FF:001124">
    <property type="entry name" value="Zinc finger protein 445"/>
    <property type="match status" value="1"/>
</dbReference>
<dbReference type="FunFam" id="3.30.160.60:FF:001966">
    <property type="entry name" value="Zinc finger protein 445"/>
    <property type="match status" value="1"/>
</dbReference>
<dbReference type="FunFam" id="3.30.160.60:FF:002000">
    <property type="entry name" value="Zinc finger protein 445"/>
    <property type="match status" value="1"/>
</dbReference>
<dbReference type="FunFam" id="3.30.160.60:FF:002001">
    <property type="entry name" value="Zinc finger protein 445"/>
    <property type="match status" value="1"/>
</dbReference>
<dbReference type="FunFam" id="3.30.160.60:FF:002132">
    <property type="entry name" value="Zinc finger protein 445"/>
    <property type="match status" value="1"/>
</dbReference>
<dbReference type="FunFam" id="3.30.160.60:FF:000624">
    <property type="entry name" value="zinc finger protein 697"/>
    <property type="match status" value="1"/>
</dbReference>
<dbReference type="Gene3D" id="6.10.140.140">
    <property type="match status" value="1"/>
</dbReference>
<dbReference type="Gene3D" id="3.30.160.60">
    <property type="entry name" value="Classic Zinc Finger"/>
    <property type="match status" value="14"/>
</dbReference>
<dbReference type="Gene3D" id="1.10.4020.10">
    <property type="entry name" value="DNA breaking-rejoining enzymes"/>
    <property type="match status" value="1"/>
</dbReference>
<dbReference type="InterPro" id="IPR001909">
    <property type="entry name" value="KRAB"/>
</dbReference>
<dbReference type="InterPro" id="IPR036051">
    <property type="entry name" value="KRAB_dom_sf"/>
</dbReference>
<dbReference type="InterPro" id="IPR003309">
    <property type="entry name" value="SCAN_dom"/>
</dbReference>
<dbReference type="InterPro" id="IPR038269">
    <property type="entry name" value="SCAN_sf"/>
</dbReference>
<dbReference type="InterPro" id="IPR036236">
    <property type="entry name" value="Znf_C2H2_sf"/>
</dbReference>
<dbReference type="InterPro" id="IPR013087">
    <property type="entry name" value="Znf_C2H2_type"/>
</dbReference>
<dbReference type="PANTHER" id="PTHR24381:SF393">
    <property type="entry name" value="CHROMATIN-LINKED ADAPTOR FOR MSL PROTEINS, ISOFORM B"/>
    <property type="match status" value="1"/>
</dbReference>
<dbReference type="PANTHER" id="PTHR24381">
    <property type="entry name" value="ZINC FINGER PROTEIN"/>
    <property type="match status" value="1"/>
</dbReference>
<dbReference type="Pfam" id="PF01352">
    <property type="entry name" value="KRAB"/>
    <property type="match status" value="1"/>
</dbReference>
<dbReference type="Pfam" id="PF02023">
    <property type="entry name" value="SCAN"/>
    <property type="match status" value="1"/>
</dbReference>
<dbReference type="Pfam" id="PF00096">
    <property type="entry name" value="zf-C2H2"/>
    <property type="match status" value="12"/>
</dbReference>
<dbReference type="SMART" id="SM00349">
    <property type="entry name" value="KRAB"/>
    <property type="match status" value="1"/>
</dbReference>
<dbReference type="SMART" id="SM00431">
    <property type="entry name" value="SCAN"/>
    <property type="match status" value="1"/>
</dbReference>
<dbReference type="SMART" id="SM00355">
    <property type="entry name" value="ZnF_C2H2"/>
    <property type="match status" value="14"/>
</dbReference>
<dbReference type="SUPFAM" id="SSF57667">
    <property type="entry name" value="beta-beta-alpha zinc fingers"/>
    <property type="match status" value="9"/>
</dbReference>
<dbReference type="SUPFAM" id="SSF109640">
    <property type="entry name" value="KRAB domain (Kruppel-associated box)"/>
    <property type="match status" value="1"/>
</dbReference>
<dbReference type="SUPFAM" id="SSF47353">
    <property type="entry name" value="Retrovirus capsid dimerization domain-like"/>
    <property type="match status" value="1"/>
</dbReference>
<dbReference type="PROSITE" id="PS50805">
    <property type="entry name" value="KRAB"/>
    <property type="match status" value="1"/>
</dbReference>
<dbReference type="PROSITE" id="PS50804">
    <property type="entry name" value="SCAN_BOX"/>
    <property type="match status" value="1"/>
</dbReference>
<dbReference type="PROSITE" id="PS00028">
    <property type="entry name" value="ZINC_FINGER_C2H2_1"/>
    <property type="match status" value="14"/>
</dbReference>
<dbReference type="PROSITE" id="PS50157">
    <property type="entry name" value="ZINC_FINGER_C2H2_2"/>
    <property type="match status" value="14"/>
</dbReference>
<sequence>MPPGRWHAAYPAQAQSSRERGRLQTVKKEEEDESYTPVQAARPQTLNRPGQELFRQLFRQLRYHESSGPLETLSRLRELCRWWLRPDVLSKAQILELLVLEQFLSILPGELRVWVQLHNPESGEEAVALLEELQRDLDGTSWRDPGPAQSPDVHWMGTGALRSAQIWSLASPLRSSSALGDHLEPPYEIEARDFLAGQSDTPAAQMPALFPREGCPGDQVTPTRSLTAQLQETMTFKDVEVTFSQDEWGWLDSAQRNLYRDVMLENYRNMASLVGPFTKPALISWLEAREPWGLNMQAAQPKGNPVAAPTGDDLQSKTNKFILNQEPLEEAETLAVSSGCPATSVSEGIGLRESFQQKSRQKDQCENPIQVRVKKEETNFSHRTGKDSEVSGSNSLDLKHVTYLRVSGRKESLKHGCGKHFRMSSHHYDYKKYGKGLRHMIGGFSLHQRIHSGLKGNKKDVCGKDFSLSSHHQRGQSLHTVGVSFKCSDCGRTFSHSSHLAYHQRLHTQEKAFKCRVCGKAFRWSSNCARHEKIHTGVKPYKCDLCEKAFRRLSAYRLHRETHAKKKFLELNQYRAALTYSSGFDHHLGDQSGEKLFDCSQCRKSFHCKSYVLEHQRIHTQEKPYKCTKCRKTFRWRSNFTRHMRLHEEEKFYKQDECREGFRQSPDCSQPQGAPAVEKTFLCQQCGKTFTRKKTLVDHQRIHTGEKPYQCSDCGKDFAYRSAFIVHKKKHAMKRKPEGGPSFSQDTVFQVPQSSHSKEEPYKCSQCGKAFRNHSFLLIHQRVHTGEKPYKCRECGKAFRWSSNLYRHQRIHSLQKQYDCHESEKTPNVEPKILTGEKRFWCQECGKTFTRKRTLLDHKGIHSGEKRYKCNLCGKSYDRNYRLVNHQRIHSTERPFKCQWCGKEFIGRHTLSSHQRKHTRAAQAERSPPARSSSQDTKLRLQKLKPSEEMPLEDCKEACSQSSRLTGLQDISIGKKCHKCSICGKTFNKSSQLISHKRFHTRERPFKCSKCGKTFRWSSNLARHMKNHIRD</sequence>
<evidence type="ECO:0000255" key="1">
    <source>
        <dbReference type="PROSITE-ProRule" id="PRU00042"/>
    </source>
</evidence>
<evidence type="ECO:0000255" key="2">
    <source>
        <dbReference type="PROSITE-ProRule" id="PRU00119"/>
    </source>
</evidence>
<evidence type="ECO:0000255" key="3">
    <source>
        <dbReference type="PROSITE-ProRule" id="PRU00187"/>
    </source>
</evidence>
<evidence type="ECO:0000256" key="4">
    <source>
        <dbReference type="SAM" id="MobiDB-lite"/>
    </source>
</evidence>
<evidence type="ECO:0000269" key="5">
    <source>
    </source>
</evidence>
<evidence type="ECO:0000303" key="6">
    <source>
    </source>
</evidence>
<evidence type="ECO:0000305" key="7"/>
<evidence type="ECO:0000312" key="8">
    <source>
        <dbReference type="HGNC" id="HGNC:21018"/>
    </source>
</evidence>
<evidence type="ECO:0007744" key="9">
    <source>
    </source>
</evidence>
<evidence type="ECO:0007744" key="10">
    <source>
    </source>
</evidence>
<evidence type="ECO:0007744" key="11">
    <source>
    </source>
</evidence>
<evidence type="ECO:0007744" key="12">
    <source>
    </source>
</evidence>
<protein>
    <recommendedName>
        <fullName evidence="7">Zinc finger protein 445</fullName>
        <shortName evidence="6">ZFP445</shortName>
    </recommendedName>
    <alternativeName>
        <fullName>Zinc finger protein 168</fullName>
    </alternativeName>
    <alternativeName>
        <fullName>Zinc finger protein with KRAB and SCAN domains 15</fullName>
    </alternativeName>
</protein>
<gene>
    <name evidence="8" type="primary">ZNF445</name>
    <name evidence="6" type="synonym">ZFP445</name>
    <name type="synonym">ZKSCAN15</name>
    <name type="synonym">ZNF168</name>
</gene>
<keyword id="KW-0238">DNA-binding</keyword>
<keyword id="KW-1017">Isopeptide bond</keyword>
<keyword id="KW-0479">Metal-binding</keyword>
<keyword id="KW-0539">Nucleus</keyword>
<keyword id="KW-1267">Proteomics identification</keyword>
<keyword id="KW-1185">Reference proteome</keyword>
<keyword id="KW-0677">Repeat</keyword>
<keyword id="KW-0804">Transcription</keyword>
<keyword id="KW-0805">Transcription regulation</keyword>
<keyword id="KW-0832">Ubl conjugation</keyword>
<keyword id="KW-0862">Zinc</keyword>
<keyword id="KW-0863">Zinc-finger</keyword>
<reference key="1">
    <citation type="submission" date="2003-03" db="EMBL/GenBank/DDBJ databases">
        <title>Cloning and characterization of a novel zinc finger protein.</title>
        <authorList>
            <person name="Shan Y.X."/>
            <person name="Luo K.T."/>
            <person name="Guo Z.K."/>
            <person name="Tang W.W."/>
            <person name="Ye G.M."/>
            <person name="Yu L."/>
            <person name="Huang C.Q."/>
        </authorList>
    </citation>
    <scope>NUCLEOTIDE SEQUENCE [MRNA]</scope>
</reference>
<reference key="2">
    <citation type="journal article" date="2004" name="Genome Res.">
        <title>The status, quality, and expansion of the NIH full-length cDNA project: the Mammalian Gene Collection (MGC).</title>
        <authorList>
            <consortium name="The MGC Project Team"/>
        </authorList>
    </citation>
    <scope>NUCLEOTIDE SEQUENCE [LARGE SCALE MRNA]</scope>
    <source>
        <tissue>Brain</tissue>
    </source>
</reference>
<reference key="3">
    <citation type="journal article" date="2014" name="Nat. Struct. Mol. Biol.">
        <title>Uncovering global SUMOylation signaling networks in a site-specific manner.</title>
        <authorList>
            <person name="Hendriks I.A."/>
            <person name="D'Souza R.C."/>
            <person name="Yang B."/>
            <person name="Verlaan-de Vries M."/>
            <person name="Mann M."/>
            <person name="Vertegaal A.C."/>
        </authorList>
    </citation>
    <scope>SUMOYLATION [LARGE SCALE ANALYSIS] AT LYS-938</scope>
    <scope>IDENTIFICATION BY MASS SPECTROMETRY [LARGE SCALE ANALYSIS]</scope>
</reference>
<reference key="4">
    <citation type="journal article" date="2014" name="Proc. Natl. Acad. Sci. U.S.A.">
        <title>Mapping of SUMO sites and analysis of SUMOylation changes induced by external stimuli.</title>
        <authorList>
            <person name="Impens F."/>
            <person name="Radoshevich L."/>
            <person name="Cossart P."/>
            <person name="Ribet D."/>
        </authorList>
    </citation>
    <scope>SUMOYLATION [LARGE SCALE ANALYSIS] AT LYS-28</scope>
    <scope>IDENTIFICATION BY MASS SPECTROMETRY [LARGE SCALE ANALYSIS]</scope>
</reference>
<reference key="5">
    <citation type="journal article" date="2015" name="Mol. Cell. Proteomics">
        <title>System-wide analysis of SUMOylation dynamics in response to replication stress reveals novel small ubiquitin-like modified target proteins and acceptor lysines relevant for genome stability.</title>
        <authorList>
            <person name="Xiao Z."/>
            <person name="Chang J.G."/>
            <person name="Hendriks I.A."/>
            <person name="Sigurdsson J.O."/>
            <person name="Olsen J.V."/>
            <person name="Vertegaal A.C."/>
        </authorList>
    </citation>
    <scope>SUMOYLATION [LARGE SCALE ANALYSIS] AT LYS-938</scope>
    <scope>IDENTIFICATION BY MASS SPECTROMETRY [LARGE SCALE ANALYSIS]</scope>
</reference>
<reference key="6">
    <citation type="journal article" date="2017" name="Nat. Struct. Mol. Biol.">
        <title>Site-specific mapping of the human SUMO proteome reveals co-modification with phosphorylation.</title>
        <authorList>
            <person name="Hendriks I.A."/>
            <person name="Lyon D."/>
            <person name="Young C."/>
            <person name="Jensen L.J."/>
            <person name="Vertegaal A.C."/>
            <person name="Nielsen M.L."/>
        </authorList>
    </citation>
    <scope>SUMOYLATION [LARGE SCALE ANALYSIS] AT LYS-317; LYS-374; LYS-375; LYS-399; LYS-567; LYS-654; LYS-736; LYS-758; LYS-938; LYS-956 AND LYS-975</scope>
    <scope>IDENTIFICATION BY MASS SPECTROMETRY [LARGE SCALE ANALYSIS]</scope>
</reference>
<reference key="7">
    <citation type="journal article" date="2019" name="Genes Dev.">
        <title>ZNF445 is a primary regulator of genomic imprinting.</title>
        <authorList>
            <person name="Takahashi N."/>
            <person name="Coluccio A."/>
            <person name="Thorball C.W."/>
            <person name="Planet E."/>
            <person name="Shi H."/>
            <person name="Offner S."/>
            <person name="Turelli P."/>
            <person name="Imbeault M."/>
            <person name="Ferguson-Smith A.C."/>
            <person name="Trono D."/>
        </authorList>
    </citation>
    <scope>FUNCTION</scope>
    <scope>DEVELOPMENTAL STAGE</scope>
    <scope>SUBCELLULAR LOCATION</scope>
</reference>
<name>ZN445_HUMAN</name>